<feature type="chain" id="PRO_1000144641" description="Large ribosomal subunit protein uL30">
    <location>
        <begin position="1"/>
        <end position="61"/>
    </location>
</feature>
<evidence type="ECO:0000255" key="1">
    <source>
        <dbReference type="HAMAP-Rule" id="MF_01371"/>
    </source>
</evidence>
<evidence type="ECO:0000305" key="2"/>
<accession>B5ELZ7</accession>
<sequence length="61" mass="7064">MSKHLRITLVKSLIGVAEKHRRVVAGLGLRHTHHSVERLDTPEIRGMVNKVPYLLRWEELS</sequence>
<organism>
    <name type="scientific">Acidithiobacillus ferrooxidans (strain ATCC 53993 / BNL-5-31)</name>
    <name type="common">Leptospirillum ferrooxidans (ATCC 53993)</name>
    <dbReference type="NCBI Taxonomy" id="380394"/>
    <lineage>
        <taxon>Bacteria</taxon>
        <taxon>Pseudomonadati</taxon>
        <taxon>Pseudomonadota</taxon>
        <taxon>Acidithiobacillia</taxon>
        <taxon>Acidithiobacillales</taxon>
        <taxon>Acidithiobacillaceae</taxon>
        <taxon>Acidithiobacillus</taxon>
    </lineage>
</organism>
<reference key="1">
    <citation type="submission" date="2008-08" db="EMBL/GenBank/DDBJ databases">
        <title>Complete sequence of Acidithiobacillus ferrooxidans ATCC 53993.</title>
        <authorList>
            <person name="Lucas S."/>
            <person name="Copeland A."/>
            <person name="Lapidus A."/>
            <person name="Glavina del Rio T."/>
            <person name="Dalin E."/>
            <person name="Tice H."/>
            <person name="Bruce D."/>
            <person name="Goodwin L."/>
            <person name="Pitluck S."/>
            <person name="Sims D."/>
            <person name="Brettin T."/>
            <person name="Detter J.C."/>
            <person name="Han C."/>
            <person name="Kuske C.R."/>
            <person name="Larimer F."/>
            <person name="Land M."/>
            <person name="Hauser L."/>
            <person name="Kyrpides N."/>
            <person name="Lykidis A."/>
            <person name="Borole A.P."/>
        </authorList>
    </citation>
    <scope>NUCLEOTIDE SEQUENCE [LARGE SCALE GENOMIC DNA]</scope>
    <source>
        <strain>ATCC 53993 / BNL-5-31</strain>
    </source>
</reference>
<gene>
    <name evidence="1" type="primary">rpmD</name>
    <name type="ordered locus">Lferr_0515</name>
</gene>
<comment type="subunit">
    <text evidence="1">Part of the 50S ribosomal subunit.</text>
</comment>
<comment type="similarity">
    <text evidence="1">Belongs to the universal ribosomal protein uL30 family.</text>
</comment>
<keyword id="KW-0687">Ribonucleoprotein</keyword>
<keyword id="KW-0689">Ribosomal protein</keyword>
<name>RL30_ACIF5</name>
<protein>
    <recommendedName>
        <fullName evidence="1">Large ribosomal subunit protein uL30</fullName>
    </recommendedName>
    <alternativeName>
        <fullName evidence="2">50S ribosomal protein L30</fullName>
    </alternativeName>
</protein>
<dbReference type="EMBL" id="CP001132">
    <property type="protein sequence ID" value="ACH82769.1"/>
    <property type="molecule type" value="Genomic_DNA"/>
</dbReference>
<dbReference type="RefSeq" id="WP_012536094.1">
    <property type="nucleotide sequence ID" value="NC_011206.1"/>
</dbReference>
<dbReference type="SMR" id="B5ELZ7"/>
<dbReference type="GeneID" id="65279723"/>
<dbReference type="KEGG" id="afe:Lferr_0515"/>
<dbReference type="eggNOG" id="COG1841">
    <property type="taxonomic scope" value="Bacteria"/>
</dbReference>
<dbReference type="HOGENOM" id="CLU_131047_1_4_6"/>
<dbReference type="GO" id="GO:0022625">
    <property type="term" value="C:cytosolic large ribosomal subunit"/>
    <property type="evidence" value="ECO:0007669"/>
    <property type="project" value="TreeGrafter"/>
</dbReference>
<dbReference type="GO" id="GO:0003735">
    <property type="term" value="F:structural constituent of ribosome"/>
    <property type="evidence" value="ECO:0007669"/>
    <property type="project" value="InterPro"/>
</dbReference>
<dbReference type="GO" id="GO:0006412">
    <property type="term" value="P:translation"/>
    <property type="evidence" value="ECO:0007669"/>
    <property type="project" value="UniProtKB-UniRule"/>
</dbReference>
<dbReference type="CDD" id="cd01658">
    <property type="entry name" value="Ribosomal_L30"/>
    <property type="match status" value="1"/>
</dbReference>
<dbReference type="FunFam" id="3.30.1390.20:FF:000001">
    <property type="entry name" value="50S ribosomal protein L30"/>
    <property type="match status" value="1"/>
</dbReference>
<dbReference type="Gene3D" id="3.30.1390.20">
    <property type="entry name" value="Ribosomal protein L30, ferredoxin-like fold domain"/>
    <property type="match status" value="1"/>
</dbReference>
<dbReference type="HAMAP" id="MF_01371_B">
    <property type="entry name" value="Ribosomal_uL30_B"/>
    <property type="match status" value="1"/>
</dbReference>
<dbReference type="InterPro" id="IPR036919">
    <property type="entry name" value="Ribo_uL30_ferredoxin-like_sf"/>
</dbReference>
<dbReference type="InterPro" id="IPR005996">
    <property type="entry name" value="Ribosomal_uL30_bac-type"/>
</dbReference>
<dbReference type="InterPro" id="IPR016082">
    <property type="entry name" value="Ribosomal_uL30_ferredoxin-like"/>
</dbReference>
<dbReference type="NCBIfam" id="TIGR01308">
    <property type="entry name" value="rpmD_bact"/>
    <property type="match status" value="1"/>
</dbReference>
<dbReference type="PANTHER" id="PTHR15892:SF2">
    <property type="entry name" value="LARGE RIBOSOMAL SUBUNIT PROTEIN UL30M"/>
    <property type="match status" value="1"/>
</dbReference>
<dbReference type="PANTHER" id="PTHR15892">
    <property type="entry name" value="MITOCHONDRIAL RIBOSOMAL PROTEIN L30"/>
    <property type="match status" value="1"/>
</dbReference>
<dbReference type="Pfam" id="PF00327">
    <property type="entry name" value="Ribosomal_L30"/>
    <property type="match status" value="1"/>
</dbReference>
<dbReference type="PIRSF" id="PIRSF002211">
    <property type="entry name" value="Ribosomal_L30_bac-type"/>
    <property type="match status" value="1"/>
</dbReference>
<dbReference type="SUPFAM" id="SSF55129">
    <property type="entry name" value="Ribosomal protein L30p/L7e"/>
    <property type="match status" value="1"/>
</dbReference>
<proteinExistence type="inferred from homology"/>